<dbReference type="EMBL" id="AL766853">
    <property type="protein sequence ID" value="CAD47417.1"/>
    <property type="molecule type" value="Genomic_DNA"/>
</dbReference>
<dbReference type="RefSeq" id="WP_000609585.1">
    <property type="nucleotide sequence ID" value="NC_004368.1"/>
</dbReference>
<dbReference type="SMR" id="P66850"/>
<dbReference type="KEGG" id="san:gbs1758"/>
<dbReference type="eggNOG" id="COG0629">
    <property type="taxonomic scope" value="Bacteria"/>
</dbReference>
<dbReference type="HOGENOM" id="CLU_078758_6_2_9"/>
<dbReference type="Proteomes" id="UP000000823">
    <property type="component" value="Chromosome"/>
</dbReference>
<dbReference type="GO" id="GO:0009295">
    <property type="term" value="C:nucleoid"/>
    <property type="evidence" value="ECO:0007669"/>
    <property type="project" value="TreeGrafter"/>
</dbReference>
<dbReference type="GO" id="GO:0003697">
    <property type="term" value="F:single-stranded DNA binding"/>
    <property type="evidence" value="ECO:0007669"/>
    <property type="project" value="UniProtKB-UniRule"/>
</dbReference>
<dbReference type="GO" id="GO:0006310">
    <property type="term" value="P:DNA recombination"/>
    <property type="evidence" value="ECO:0007669"/>
    <property type="project" value="UniProtKB-UniRule"/>
</dbReference>
<dbReference type="GO" id="GO:0006281">
    <property type="term" value="P:DNA repair"/>
    <property type="evidence" value="ECO:0007669"/>
    <property type="project" value="UniProtKB-UniRule"/>
</dbReference>
<dbReference type="GO" id="GO:0006260">
    <property type="term" value="P:DNA replication"/>
    <property type="evidence" value="ECO:0007669"/>
    <property type="project" value="UniProtKB-UniRule"/>
</dbReference>
<dbReference type="CDD" id="cd04496">
    <property type="entry name" value="SSB_OBF"/>
    <property type="match status" value="1"/>
</dbReference>
<dbReference type="FunFam" id="2.40.50.140:FF:000084">
    <property type="entry name" value="Single-stranded DNA-binding protein"/>
    <property type="match status" value="1"/>
</dbReference>
<dbReference type="Gene3D" id="2.40.50.140">
    <property type="entry name" value="Nucleic acid-binding proteins"/>
    <property type="match status" value="1"/>
</dbReference>
<dbReference type="HAMAP" id="MF_00984">
    <property type="entry name" value="SSB"/>
    <property type="match status" value="1"/>
</dbReference>
<dbReference type="InterPro" id="IPR012340">
    <property type="entry name" value="NA-bd_OB-fold"/>
</dbReference>
<dbReference type="InterPro" id="IPR000424">
    <property type="entry name" value="Primosome_PriB/ssb"/>
</dbReference>
<dbReference type="InterPro" id="IPR011344">
    <property type="entry name" value="ssDNA-bd"/>
</dbReference>
<dbReference type="NCBIfam" id="NF005580">
    <property type="entry name" value="PRK07275.1"/>
    <property type="match status" value="1"/>
</dbReference>
<dbReference type="NCBIfam" id="TIGR00621">
    <property type="entry name" value="ssb"/>
    <property type="match status" value="1"/>
</dbReference>
<dbReference type="PANTHER" id="PTHR10302">
    <property type="entry name" value="SINGLE-STRANDED DNA-BINDING PROTEIN"/>
    <property type="match status" value="1"/>
</dbReference>
<dbReference type="PANTHER" id="PTHR10302:SF27">
    <property type="entry name" value="SINGLE-STRANDED DNA-BINDING PROTEIN"/>
    <property type="match status" value="1"/>
</dbReference>
<dbReference type="Pfam" id="PF00436">
    <property type="entry name" value="SSB"/>
    <property type="match status" value="1"/>
</dbReference>
<dbReference type="PIRSF" id="PIRSF002070">
    <property type="entry name" value="SSB"/>
    <property type="match status" value="1"/>
</dbReference>
<dbReference type="SUPFAM" id="SSF50249">
    <property type="entry name" value="Nucleic acid-binding proteins"/>
    <property type="match status" value="1"/>
</dbReference>
<dbReference type="PROSITE" id="PS50935">
    <property type="entry name" value="SSB"/>
    <property type="match status" value="1"/>
</dbReference>
<gene>
    <name type="primary">ssb1</name>
    <name type="ordered locus">gbs1758</name>
</gene>
<sequence>MINNVVLVGRMTRDAELRYTPSNQAVATFSLAVNRNFKNQSGEREADFINCVIWRQQAENLANWAKKGALVGITGRIQTRNYENQQGQRVYVTEVVAESFQLLESRATREGGSPNSYNNGGYNNAPSNNSYSASSQQTPNFSRDESPFGNSNPMDISDDDLPF</sequence>
<protein>
    <recommendedName>
        <fullName evidence="1">Single-stranded DNA-binding protein 1</fullName>
        <shortName evidence="1">SSB 1</shortName>
    </recommendedName>
</protein>
<evidence type="ECO:0000255" key="1">
    <source>
        <dbReference type="HAMAP-Rule" id="MF_00984"/>
    </source>
</evidence>
<evidence type="ECO:0000256" key="2">
    <source>
        <dbReference type="SAM" id="MobiDB-lite"/>
    </source>
</evidence>
<organism>
    <name type="scientific">Streptococcus agalactiae serotype III (strain NEM316)</name>
    <dbReference type="NCBI Taxonomy" id="211110"/>
    <lineage>
        <taxon>Bacteria</taxon>
        <taxon>Bacillati</taxon>
        <taxon>Bacillota</taxon>
        <taxon>Bacilli</taxon>
        <taxon>Lactobacillales</taxon>
        <taxon>Streptococcaceae</taxon>
        <taxon>Streptococcus</taxon>
    </lineage>
</organism>
<name>SSB1_STRA3</name>
<keyword id="KW-0227">DNA damage</keyword>
<keyword id="KW-0233">DNA recombination</keyword>
<keyword id="KW-0234">DNA repair</keyword>
<keyword id="KW-0235">DNA replication</keyword>
<keyword id="KW-0238">DNA-binding</keyword>
<reference key="1">
    <citation type="journal article" date="2002" name="Mol. Microbiol.">
        <title>Genome sequence of Streptococcus agalactiae, a pathogen causing invasive neonatal disease.</title>
        <authorList>
            <person name="Glaser P."/>
            <person name="Rusniok C."/>
            <person name="Buchrieser C."/>
            <person name="Chevalier F."/>
            <person name="Frangeul L."/>
            <person name="Msadek T."/>
            <person name="Zouine M."/>
            <person name="Couve E."/>
            <person name="Lalioui L."/>
            <person name="Poyart C."/>
            <person name="Trieu-Cuot P."/>
            <person name="Kunst F."/>
        </authorList>
    </citation>
    <scope>NUCLEOTIDE SEQUENCE [LARGE SCALE GENOMIC DNA]</scope>
    <source>
        <strain>NEM316</strain>
    </source>
</reference>
<comment type="function">
    <text evidence="1">Plays an important role in DNA replication, recombination and repair. Binds to ssDNA and to an array of partner proteins to recruit them to their sites of action during DNA metabolism.</text>
</comment>
<comment type="subunit">
    <text evidence="1">Homotetramer.</text>
</comment>
<feature type="chain" id="PRO_0000096107" description="Single-stranded DNA-binding protein 1">
    <location>
        <begin position="1"/>
        <end position="163"/>
    </location>
</feature>
<feature type="domain" description="SSB" evidence="1">
    <location>
        <begin position="1"/>
        <end position="104"/>
    </location>
</feature>
<feature type="region of interest" description="Disordered" evidence="2">
    <location>
        <begin position="106"/>
        <end position="163"/>
    </location>
</feature>
<feature type="short sequence motif" description="Important for interaction with partner proteins" evidence="1">
    <location>
        <begin position="158"/>
        <end position="163"/>
    </location>
</feature>
<feature type="compositionally biased region" description="Low complexity" evidence="2">
    <location>
        <begin position="111"/>
        <end position="135"/>
    </location>
</feature>
<proteinExistence type="inferred from homology"/>
<accession>P66850</accession>
<accession>Q8DXY2</accession>
<accession>Q8E3K1</accession>